<organism>
    <name type="scientific">Pinus ponderosa</name>
    <name type="common">Ponderosa pine</name>
    <dbReference type="NCBI Taxonomy" id="55062"/>
    <lineage>
        <taxon>Eukaryota</taxon>
        <taxon>Viridiplantae</taxon>
        <taxon>Streptophyta</taxon>
        <taxon>Embryophyta</taxon>
        <taxon>Tracheophyta</taxon>
        <taxon>Spermatophyta</taxon>
        <taxon>Pinopsida</taxon>
        <taxon>Pinidae</taxon>
        <taxon>Conifers I</taxon>
        <taxon>Pinales</taxon>
        <taxon>Pinaceae</taxon>
        <taxon>Pinus</taxon>
        <taxon>Pinus subgen. Pinus</taxon>
    </lineage>
</organism>
<comment type="function">
    <text evidence="1">Usually encoded in the trnK tRNA gene intron. Probably assists in splicing its own and other chloroplast group II introns.</text>
</comment>
<comment type="subcellular location">
    <subcellularLocation>
        <location>Plastid</location>
        <location>Chloroplast</location>
    </subcellularLocation>
</comment>
<comment type="similarity">
    <text evidence="1">Belongs to the intron maturase 2 family. MatK subfamily.</text>
</comment>
<keyword id="KW-0150">Chloroplast</keyword>
<keyword id="KW-0507">mRNA processing</keyword>
<keyword id="KW-0934">Plastid</keyword>
<keyword id="KW-0694">RNA-binding</keyword>
<keyword id="KW-0819">tRNA processing</keyword>
<feature type="chain" id="PRO_0000143624" description="Maturase K">
    <location>
        <begin position="1"/>
        <end position="515"/>
    </location>
</feature>
<dbReference type="EMBL" id="AB080924">
    <property type="protein sequence ID" value="BAC11927.1"/>
    <property type="molecule type" value="Genomic_DNA"/>
</dbReference>
<dbReference type="RefSeq" id="YP_010526884.1">
    <property type="nucleotide sequence ID" value="NC_067715.1"/>
</dbReference>
<dbReference type="GeneID" id="76329306"/>
<dbReference type="GO" id="GO:0009507">
    <property type="term" value="C:chloroplast"/>
    <property type="evidence" value="ECO:0007669"/>
    <property type="project" value="UniProtKB-SubCell"/>
</dbReference>
<dbReference type="GO" id="GO:0003723">
    <property type="term" value="F:RNA binding"/>
    <property type="evidence" value="ECO:0007669"/>
    <property type="project" value="UniProtKB-KW"/>
</dbReference>
<dbReference type="GO" id="GO:0006397">
    <property type="term" value="P:mRNA processing"/>
    <property type="evidence" value="ECO:0007669"/>
    <property type="project" value="UniProtKB-KW"/>
</dbReference>
<dbReference type="GO" id="GO:0008380">
    <property type="term" value="P:RNA splicing"/>
    <property type="evidence" value="ECO:0007669"/>
    <property type="project" value="UniProtKB-UniRule"/>
</dbReference>
<dbReference type="GO" id="GO:0008033">
    <property type="term" value="P:tRNA processing"/>
    <property type="evidence" value="ECO:0007669"/>
    <property type="project" value="UniProtKB-KW"/>
</dbReference>
<dbReference type="HAMAP" id="MF_01390">
    <property type="entry name" value="MatK"/>
    <property type="match status" value="1"/>
</dbReference>
<dbReference type="InterPro" id="IPR024937">
    <property type="entry name" value="Domain_X"/>
</dbReference>
<dbReference type="InterPro" id="IPR002866">
    <property type="entry name" value="Maturase_MatK"/>
</dbReference>
<dbReference type="InterPro" id="IPR024942">
    <property type="entry name" value="Maturase_MatK_N"/>
</dbReference>
<dbReference type="PANTHER" id="PTHR34811">
    <property type="entry name" value="MATURASE K"/>
    <property type="match status" value="1"/>
</dbReference>
<dbReference type="PANTHER" id="PTHR34811:SF1">
    <property type="entry name" value="MATURASE K"/>
    <property type="match status" value="1"/>
</dbReference>
<dbReference type="Pfam" id="PF01348">
    <property type="entry name" value="Intron_maturas2"/>
    <property type="match status" value="1"/>
</dbReference>
<dbReference type="Pfam" id="PF01824">
    <property type="entry name" value="MatK_N"/>
    <property type="match status" value="1"/>
</dbReference>
<evidence type="ECO:0000255" key="1">
    <source>
        <dbReference type="HAMAP-Rule" id="MF_01390"/>
    </source>
</evidence>
<gene>
    <name evidence="1" type="primary">matK</name>
</gene>
<geneLocation type="chloroplast"/>
<name>MATK_PINPO</name>
<proteinExistence type="inferred from homology"/>
<protein>
    <recommendedName>
        <fullName evidence="1">Maturase K</fullName>
    </recommendedName>
    <alternativeName>
        <fullName evidence="1">Intron maturase</fullName>
    </alternativeName>
</protein>
<reference key="1">
    <citation type="submission" date="2002-03" db="EMBL/GenBank/DDBJ databases">
        <title>Phylogeny of the North American pines.</title>
        <authorList>
            <person name="Geada Lopez G."/>
            <person name="Kamiya K."/>
            <person name="Harada K."/>
        </authorList>
    </citation>
    <scope>NUCLEOTIDE SEQUENCE [GENOMIC DNA]</scope>
    <source>
        <tissue>Leaf</tissue>
    </source>
</reference>
<accession>Q8HQT9</accession>
<sequence length="515" mass="61033">MDEFHRCGKEDSFWQQCFLYPLFFQEDLYAISHDHYLDVSSSSRPMEHLSSNDQLSFLTVKRLIGQIRQQNHSIVLFVNCDPNPLADRKKSFYSESVLEALTLVLEVPFSIWSKYSVEGMNESKSFRSIHSIFPFLEDKFPHSNSILDARIPYSIHPEILVRTFRRWIRDAPSLHPLRSVLYEYRNSPDNLQRSIIVVPRVNTRFFLFLWNYYVCECESILFSRLKRSSHSRSLSHGSFPQRTHFHRKIKHIIIFSRRNSLKSIWSLKDPKIHYVRYGERPIIAIKGAHLLVKKCRYYLLIFRQFYFHLWSEPYRVCSHQLSKNCSSSPGYFLRVRMNPILVRTKMLDELFIADLITDEIDPIVPIVPIIGLLATEKFCDISGRPISKLSWTSLTDDDILDRFDQIWRNLFHYYSGSFDRDGLYRIKYILSLSCAKTLACKHKSTIRVVRKELGPELFKKSFSKEREFYSLRFSSKAAARSQRERIWHSDIPQINPLANSWQKIQDLKIENLFDQ</sequence>